<comment type="function">
    <text evidence="4 5">Has antimicrobial activity against the Gram-negative bacteria E.coli and P.mirabilis, the Gram-positive bacterium L.monocytogenes and the yeast C.albicans.</text>
</comment>
<comment type="mass spectrometry" mass="2758.1" method="MALDI" evidence="4"/>
<evidence type="ECO:0000250" key="1"/>
<evidence type="ECO:0000255" key="2"/>
<evidence type="ECO:0000255" key="3">
    <source>
        <dbReference type="PROSITE-ProRule" id="PRU00255"/>
    </source>
</evidence>
<evidence type="ECO:0000269" key="4">
    <source>
    </source>
</evidence>
<evidence type="ECO:0000269" key="5">
    <source>
    </source>
</evidence>
<evidence type="ECO:0000305" key="6"/>
<evidence type="ECO:0000312" key="7">
    <source>
        <dbReference type="EMBL" id="AAV65142.1"/>
    </source>
</evidence>
<evidence type="ECO:0007829" key="8">
    <source>
        <dbReference type="PDB" id="2JSB"/>
    </source>
</evidence>
<sequence length="202" mass="22497">MTSTQSVAVCATLILAIFCVNDIHCDPIAEARAAAFGEREARSDGEWKQFDVNGEKIEVNEQENREIIRQAGGDGVEGSVMVIDHAKGLISWSIPRAGECYLIGGVDKQLPDAQELLHYFQSAQGSADGEGVESALDYVKAEDRPVTDLNLLAPEVREACQGKSVYWLEKSSGDNNEPEKRRWCVYAYVRVRGVLVRYRRCW</sequence>
<organism>
    <name type="scientific">Arenicola marina</name>
    <name type="common">Lugworm</name>
    <name type="synonym">Lumbricus marinus</name>
    <dbReference type="NCBI Taxonomy" id="6344"/>
    <lineage>
        <taxon>Eukaryota</taxon>
        <taxon>Metazoa</taxon>
        <taxon>Spiralia</taxon>
        <taxon>Lophotrochozoa</taxon>
        <taxon>Annelida</taxon>
        <taxon>Polychaeta</taxon>
        <taxon>Sedentaria</taxon>
        <taxon>Scolecida</taxon>
        <taxon>Arenicolidae</taxon>
        <taxon>Arenicola</taxon>
    </lineage>
</organism>
<proteinExistence type="evidence at protein level"/>
<accession>Q5SC60</accession>
<accession>P84105</accession>
<name>ANN1_AREMA</name>
<reference evidence="6 7" key="1">
    <citation type="journal article" date="2004" name="FEBS Lett.">
        <title>Purification and primary structure of two isoforms of arenicin, a novel antimicrobial peptide from marine polychaeta Arenicola marina.</title>
        <authorList>
            <person name="Ovchinnikova T.V."/>
            <person name="Aleshina G.M."/>
            <person name="Balandin S.V."/>
            <person name="Krasnosdembskaya A.D."/>
            <person name="Markelov M.L."/>
            <person name="Frolova E.I."/>
            <person name="Leonova Y.F."/>
            <person name="Tagaev A.A."/>
            <person name="Krasnodembsky E.G."/>
            <person name="Kokryakov V.N."/>
        </authorList>
    </citation>
    <scope>NUCLEOTIDE SEQUENCE [MRNA]</scope>
    <scope>PROTEIN SEQUENCE OF 182-202</scope>
    <scope>FUNCTION</scope>
    <scope>MASS SPECTROMETRY</scope>
    <scope>DISULFIDE BOND</scope>
    <source>
        <tissue evidence="4">Coelomocyte</tissue>
    </source>
</reference>
<reference key="2">
    <citation type="journal article" date="2008" name="Biochem. J.">
        <title>Structure and mode of action of the antimicrobial peptide arenicin.</title>
        <authorList>
            <person name="Andra J."/>
            <person name="Jakovkin I."/>
            <person name="Grotzinger J."/>
            <person name="Hecht O."/>
            <person name="Krasnosdembskaya A.D."/>
            <person name="Goldmann T."/>
            <person name="Gutsmann T."/>
            <person name="Leippe M."/>
        </authorList>
    </citation>
    <scope>STRUCTURE BY NMR OF 182-202</scope>
    <scope>FUNCTION</scope>
    <scope>DISULFIDE BOND</scope>
</reference>
<dbReference type="EMBL" id="AY684856">
    <property type="protein sequence ID" value="AAV65142.1"/>
    <property type="molecule type" value="mRNA"/>
</dbReference>
<dbReference type="PDB" id="2JSB">
    <property type="method" value="NMR"/>
    <property type="chains" value="A=182-202"/>
</dbReference>
<dbReference type="PDB" id="5M9U">
    <property type="method" value="NMR"/>
    <property type="chains" value="A=182-202"/>
</dbReference>
<dbReference type="PDBsum" id="2JSB"/>
<dbReference type="PDBsum" id="5M9U"/>
<dbReference type="BMRB" id="Q5SC60"/>
<dbReference type="SMR" id="Q5SC60"/>
<dbReference type="TCDB" id="1.C.81.1.1">
    <property type="family name" value="the arenicin (arenicin) family"/>
</dbReference>
<dbReference type="GO" id="GO:0042742">
    <property type="term" value="P:defense response to bacterium"/>
    <property type="evidence" value="ECO:0007669"/>
    <property type="project" value="UniProtKB-KW"/>
</dbReference>
<dbReference type="GO" id="GO:0050832">
    <property type="term" value="P:defense response to fungus"/>
    <property type="evidence" value="ECO:0007669"/>
    <property type="project" value="UniProtKB-KW"/>
</dbReference>
<dbReference type="GO" id="GO:0031640">
    <property type="term" value="P:killing of cells of another organism"/>
    <property type="evidence" value="ECO:0007669"/>
    <property type="project" value="UniProtKB-KW"/>
</dbReference>
<dbReference type="Gene3D" id="3.30.390.150">
    <property type="match status" value="1"/>
</dbReference>
<dbReference type="InterPro" id="IPR007084">
    <property type="entry name" value="BRICHOS_dom"/>
</dbReference>
<dbReference type="Pfam" id="PF04089">
    <property type="entry name" value="BRICHOS"/>
    <property type="match status" value="1"/>
</dbReference>
<dbReference type="PROSITE" id="PS50869">
    <property type="entry name" value="BRICHOS"/>
    <property type="match status" value="1"/>
</dbReference>
<protein>
    <recommendedName>
        <fullName>Arenicin-1</fullName>
    </recommendedName>
</protein>
<keyword id="KW-0002">3D-structure</keyword>
<keyword id="KW-0044">Antibiotic</keyword>
<keyword id="KW-0929">Antimicrobial</keyword>
<keyword id="KW-0165">Cleavage on pair of basic residues</keyword>
<keyword id="KW-0903">Direct protein sequencing</keyword>
<keyword id="KW-1015">Disulfide bond</keyword>
<keyword id="KW-0295">Fungicide</keyword>
<keyword id="KW-0732">Signal</keyword>
<feature type="signal peptide" evidence="2">
    <location>
        <begin position="1"/>
        <end position="25"/>
    </location>
</feature>
<feature type="propeptide" id="PRO_0000020731" evidence="2 4">
    <location>
        <begin position="26"/>
        <end position="181"/>
    </location>
</feature>
<feature type="peptide" id="PRO_0000020732" description="Arenicin-1" evidence="4">
    <location>
        <begin position="182"/>
        <end position="202"/>
    </location>
</feature>
<feature type="domain" description="BRICHOS" evidence="3">
    <location>
        <begin position="73"/>
        <end position="168"/>
    </location>
</feature>
<feature type="disulfide bond" evidence="1">
    <location>
        <begin position="100"/>
        <end position="160"/>
    </location>
</feature>
<feature type="disulfide bond" evidence="4 5">
    <location>
        <begin position="184"/>
        <end position="201"/>
    </location>
</feature>
<feature type="strand" evidence="8">
    <location>
        <begin position="183"/>
        <end position="191"/>
    </location>
</feature>
<feature type="strand" evidence="8">
    <location>
        <begin position="194"/>
        <end position="202"/>
    </location>
</feature>